<evidence type="ECO:0000255" key="1">
    <source>
        <dbReference type="HAMAP-Rule" id="MF_00230"/>
    </source>
</evidence>
<comment type="function">
    <text evidence="1">Catalyzes the synthesis of alpha-ribazole-5'-phosphate from nicotinate mononucleotide (NAMN) and 5,6-dimethylbenzimidazole (DMB).</text>
</comment>
<comment type="catalytic activity">
    <reaction evidence="1">
        <text>5,6-dimethylbenzimidazole + nicotinate beta-D-ribonucleotide = alpha-ribazole 5'-phosphate + nicotinate + H(+)</text>
        <dbReference type="Rhea" id="RHEA:11196"/>
        <dbReference type="ChEBI" id="CHEBI:15378"/>
        <dbReference type="ChEBI" id="CHEBI:15890"/>
        <dbReference type="ChEBI" id="CHEBI:32544"/>
        <dbReference type="ChEBI" id="CHEBI:57502"/>
        <dbReference type="ChEBI" id="CHEBI:57918"/>
        <dbReference type="EC" id="2.4.2.21"/>
    </reaction>
</comment>
<comment type="pathway">
    <text evidence="1">Nucleoside biosynthesis; alpha-ribazole biosynthesis; alpha-ribazole from 5,6-dimethylbenzimidazole: step 1/2.</text>
</comment>
<comment type="similarity">
    <text evidence="1">Belongs to the CobT family.</text>
</comment>
<protein>
    <recommendedName>
        <fullName evidence="1">Nicotinate-nucleotide--dimethylbenzimidazole phosphoribosyltransferase</fullName>
        <shortName evidence="1">NN:DBI PRT</shortName>
        <ecNumber evidence="1">2.4.2.21</ecNumber>
    </recommendedName>
    <alternativeName>
        <fullName evidence="1">N(1)-alpha-phosphoribosyltransferase</fullName>
    </alternativeName>
</protein>
<accession>Q0TRK5</accession>
<feature type="chain" id="PRO_1000021585" description="Nicotinate-nucleotide--dimethylbenzimidazole phosphoribosyltransferase">
    <location>
        <begin position="1"/>
        <end position="361"/>
    </location>
</feature>
<feature type="active site" description="Proton acceptor" evidence="1">
    <location>
        <position position="315"/>
    </location>
</feature>
<reference key="1">
    <citation type="journal article" date="2006" name="Genome Res.">
        <title>Skewed genomic variability in strains of the toxigenic bacterial pathogen, Clostridium perfringens.</title>
        <authorList>
            <person name="Myers G.S.A."/>
            <person name="Rasko D.A."/>
            <person name="Cheung J.K."/>
            <person name="Ravel J."/>
            <person name="Seshadri R."/>
            <person name="DeBoy R.T."/>
            <person name="Ren Q."/>
            <person name="Varga J."/>
            <person name="Awad M.M."/>
            <person name="Brinkac L.M."/>
            <person name="Daugherty S.C."/>
            <person name="Haft D.H."/>
            <person name="Dodson R.J."/>
            <person name="Madupu R."/>
            <person name="Nelson W.C."/>
            <person name="Rosovitz M.J."/>
            <person name="Sullivan S.A."/>
            <person name="Khouri H."/>
            <person name="Dimitrov G.I."/>
            <person name="Watkins K.L."/>
            <person name="Mulligan S."/>
            <person name="Benton J."/>
            <person name="Radune D."/>
            <person name="Fisher D.J."/>
            <person name="Atkins H.S."/>
            <person name="Hiscox T."/>
            <person name="Jost B.H."/>
            <person name="Billington S.J."/>
            <person name="Songer J.G."/>
            <person name="McClane B.A."/>
            <person name="Titball R.W."/>
            <person name="Rood J.I."/>
            <person name="Melville S.B."/>
            <person name="Paulsen I.T."/>
        </authorList>
    </citation>
    <scope>NUCLEOTIDE SEQUENCE [LARGE SCALE GENOMIC DNA]</scope>
    <source>
        <strain>ATCC 13124 / DSM 756 / JCM 1290 / NCIMB 6125 / NCTC 8237 / S 107 / Type A</strain>
    </source>
</reference>
<gene>
    <name evidence="1" type="primary">cobT</name>
    <name type="ordered locus">CPF_1289</name>
</gene>
<dbReference type="EC" id="2.4.2.21" evidence="1"/>
<dbReference type="EMBL" id="CP000246">
    <property type="protein sequence ID" value="ABG83123.1"/>
    <property type="molecule type" value="Genomic_DNA"/>
</dbReference>
<dbReference type="RefSeq" id="WP_011590652.1">
    <property type="nucleotide sequence ID" value="NC_008261.1"/>
</dbReference>
<dbReference type="SMR" id="Q0TRK5"/>
<dbReference type="STRING" id="195103.CPF_1289"/>
<dbReference type="PaxDb" id="195103-CPF_1289"/>
<dbReference type="GeneID" id="93002398"/>
<dbReference type="KEGG" id="cpf:CPF_1289"/>
<dbReference type="eggNOG" id="COG2038">
    <property type="taxonomic scope" value="Bacteria"/>
</dbReference>
<dbReference type="HOGENOM" id="CLU_002982_0_0_9"/>
<dbReference type="UniPathway" id="UPA00061">
    <property type="reaction ID" value="UER00516"/>
</dbReference>
<dbReference type="Proteomes" id="UP000001823">
    <property type="component" value="Chromosome"/>
</dbReference>
<dbReference type="GO" id="GO:0008939">
    <property type="term" value="F:nicotinate-nucleotide-dimethylbenzimidazole phosphoribosyltransferase activity"/>
    <property type="evidence" value="ECO:0007669"/>
    <property type="project" value="UniProtKB-UniRule"/>
</dbReference>
<dbReference type="GO" id="GO:0009236">
    <property type="term" value="P:cobalamin biosynthetic process"/>
    <property type="evidence" value="ECO:0007669"/>
    <property type="project" value="UniProtKB-KW"/>
</dbReference>
<dbReference type="CDD" id="cd02439">
    <property type="entry name" value="DMB-PRT_CobT"/>
    <property type="match status" value="1"/>
</dbReference>
<dbReference type="FunFam" id="3.40.50.10210:FF:000001">
    <property type="entry name" value="Nicotinate-nucleotide--dimethylbenzimidazole phosphoribosyltransferase"/>
    <property type="match status" value="1"/>
</dbReference>
<dbReference type="Gene3D" id="1.10.1610.10">
    <property type="match status" value="1"/>
</dbReference>
<dbReference type="Gene3D" id="3.40.50.10210">
    <property type="match status" value="1"/>
</dbReference>
<dbReference type="HAMAP" id="MF_00230">
    <property type="entry name" value="CobT"/>
    <property type="match status" value="1"/>
</dbReference>
<dbReference type="InterPro" id="IPR003200">
    <property type="entry name" value="Nict_dMeBzImd_PRibTrfase"/>
</dbReference>
<dbReference type="InterPro" id="IPR017846">
    <property type="entry name" value="Nict_dMeBzImd_PRibTrfase_bact"/>
</dbReference>
<dbReference type="InterPro" id="IPR023195">
    <property type="entry name" value="Nict_dMeBzImd_PRibTrfase_N"/>
</dbReference>
<dbReference type="InterPro" id="IPR036087">
    <property type="entry name" value="Nict_dMeBzImd_PRibTrfase_sf"/>
</dbReference>
<dbReference type="NCBIfam" id="TIGR03160">
    <property type="entry name" value="cobT_DBIPRT"/>
    <property type="match status" value="1"/>
</dbReference>
<dbReference type="NCBIfam" id="NF000996">
    <property type="entry name" value="PRK00105.1"/>
    <property type="match status" value="1"/>
</dbReference>
<dbReference type="PANTHER" id="PTHR43463">
    <property type="entry name" value="NICOTINATE-NUCLEOTIDE--DIMETHYLBENZIMIDAZOLE PHOSPHORIBOSYLTRANSFERASE"/>
    <property type="match status" value="1"/>
</dbReference>
<dbReference type="PANTHER" id="PTHR43463:SF1">
    <property type="entry name" value="NICOTINATE-NUCLEOTIDE--DIMETHYLBENZIMIDAZOLE PHOSPHORIBOSYLTRANSFERASE"/>
    <property type="match status" value="1"/>
</dbReference>
<dbReference type="Pfam" id="PF02277">
    <property type="entry name" value="DBI_PRT"/>
    <property type="match status" value="1"/>
</dbReference>
<dbReference type="SUPFAM" id="SSF52733">
    <property type="entry name" value="Nicotinate mononucleotide:5,6-dimethylbenzimidazole phosphoribosyltransferase (CobT)"/>
    <property type="match status" value="1"/>
</dbReference>
<sequence>MLNEVLKGIEGLDNDMILKAKNRVDSLAKPLGSLGKLEDIAIRLSGITGNMFNNIDKKCVIIMSSDNGVEEEGVASAPQCVTLLQTKNFIKGTTGVATLAKSNGTDLMVFDVGINSDEVVEGVINRKISKGTKNIYKEPAMTYEEAKKSLEIGIEAVKIAKEKGYKILGVGEMGIGNTTTSAAVLKALIGCETSQVVGKGGGINNASFEKKKRIVEEVVKKHNINFDDPIDIISKVGGYDIGAMTGVFLGAAFYRIPVVIDGFISVVAALLANRLNPLVKEFCFTSHKSQEIGYELAIKELGLDPMLDLNMRLGEGSGCPIAFSVIDFATAMMNNMATFEEGNIDNSYLEDVKDEECYIVL</sequence>
<organism>
    <name type="scientific">Clostridium perfringens (strain ATCC 13124 / DSM 756 / JCM 1290 / NCIMB 6125 / NCTC 8237 / Type A)</name>
    <dbReference type="NCBI Taxonomy" id="195103"/>
    <lineage>
        <taxon>Bacteria</taxon>
        <taxon>Bacillati</taxon>
        <taxon>Bacillota</taxon>
        <taxon>Clostridia</taxon>
        <taxon>Eubacteriales</taxon>
        <taxon>Clostridiaceae</taxon>
        <taxon>Clostridium</taxon>
    </lineage>
</organism>
<name>COBT_CLOP1</name>
<proteinExistence type="inferred from homology"/>
<keyword id="KW-0169">Cobalamin biosynthesis</keyword>
<keyword id="KW-0328">Glycosyltransferase</keyword>
<keyword id="KW-0808">Transferase</keyword>